<accession>A9R465</accession>
<comment type="function">
    <text evidence="1">Part of a sulfur-relay system required for 2-thiolation of 5-methylaminomethyl-2-thiouridine (mnm(5)s(2)U) at tRNA wobble positions.</text>
</comment>
<comment type="subunit">
    <text evidence="1">Heterohexamer, formed by a dimer of trimers. The hexameric TusBCD complex contains 2 copies each of TusB, TusC and TusD. The TusBCD complex interacts with TusE.</text>
</comment>
<comment type="subcellular location">
    <subcellularLocation>
        <location evidence="1">Cytoplasm</location>
    </subcellularLocation>
</comment>
<comment type="similarity">
    <text evidence="1">Belongs to the DsrH/TusB family.</text>
</comment>
<evidence type="ECO:0000255" key="1">
    <source>
        <dbReference type="HAMAP-Rule" id="MF_01564"/>
    </source>
</evidence>
<keyword id="KW-0963">Cytoplasm</keyword>
<keyword id="KW-0819">tRNA processing</keyword>
<gene>
    <name evidence="1" type="primary">tusB</name>
    <name type="ordered locus">YpAngola_A3679</name>
</gene>
<reference key="1">
    <citation type="journal article" date="2010" name="J. Bacteriol.">
        <title>Genome sequence of the deep-rooted Yersinia pestis strain Angola reveals new insights into the evolution and pangenome of the plague bacterium.</title>
        <authorList>
            <person name="Eppinger M."/>
            <person name="Worsham P.L."/>
            <person name="Nikolich M.P."/>
            <person name="Riley D.R."/>
            <person name="Sebastian Y."/>
            <person name="Mou S."/>
            <person name="Achtman M."/>
            <person name="Lindler L.E."/>
            <person name="Ravel J."/>
        </authorList>
    </citation>
    <scope>NUCLEOTIDE SEQUENCE [LARGE SCALE GENOMIC DNA]</scope>
    <source>
        <strain>Angola</strain>
    </source>
</reference>
<dbReference type="EMBL" id="CP000901">
    <property type="protein sequence ID" value="ABX86725.1"/>
    <property type="molecule type" value="Genomic_DNA"/>
</dbReference>
<dbReference type="RefSeq" id="WP_002212322.1">
    <property type="nucleotide sequence ID" value="NZ_CP009935.1"/>
</dbReference>
<dbReference type="SMR" id="A9R465"/>
<dbReference type="GeneID" id="57974404"/>
<dbReference type="KEGG" id="ypg:YpAngola_A3679"/>
<dbReference type="PATRIC" id="fig|349746.12.peg.384"/>
<dbReference type="GO" id="GO:1990228">
    <property type="term" value="C:sulfurtransferase complex"/>
    <property type="evidence" value="ECO:0007669"/>
    <property type="project" value="TreeGrafter"/>
</dbReference>
<dbReference type="GO" id="GO:0002143">
    <property type="term" value="P:tRNA wobble position uridine thiolation"/>
    <property type="evidence" value="ECO:0007669"/>
    <property type="project" value="InterPro"/>
</dbReference>
<dbReference type="FunFam" id="3.40.1260.10:FF:000002">
    <property type="entry name" value="Sulfurtransferase TusB"/>
    <property type="match status" value="1"/>
</dbReference>
<dbReference type="Gene3D" id="3.40.1260.10">
    <property type="entry name" value="DsrEFH-like"/>
    <property type="match status" value="1"/>
</dbReference>
<dbReference type="HAMAP" id="MF_01564">
    <property type="entry name" value="Thiourid_synth_B"/>
    <property type="match status" value="1"/>
</dbReference>
<dbReference type="InterPro" id="IPR027396">
    <property type="entry name" value="DsrEFH-like"/>
</dbReference>
<dbReference type="InterPro" id="IPR023526">
    <property type="entry name" value="Sulphur_relay_TusB"/>
</dbReference>
<dbReference type="InterPro" id="IPR007215">
    <property type="entry name" value="Sulphur_relay_TusB/DsrH"/>
</dbReference>
<dbReference type="NCBIfam" id="NF010035">
    <property type="entry name" value="PRK13510.1"/>
    <property type="match status" value="1"/>
</dbReference>
<dbReference type="NCBIfam" id="TIGR03011">
    <property type="entry name" value="sulf_tusB_dsrH"/>
    <property type="match status" value="1"/>
</dbReference>
<dbReference type="PANTHER" id="PTHR37526">
    <property type="entry name" value="PROTEIN TUSB"/>
    <property type="match status" value="1"/>
</dbReference>
<dbReference type="PANTHER" id="PTHR37526:SF1">
    <property type="entry name" value="PROTEIN TUSB"/>
    <property type="match status" value="1"/>
</dbReference>
<dbReference type="Pfam" id="PF04077">
    <property type="entry name" value="DsrH"/>
    <property type="match status" value="1"/>
</dbReference>
<dbReference type="SUPFAM" id="SSF75169">
    <property type="entry name" value="DsrEFH-like"/>
    <property type="match status" value="1"/>
</dbReference>
<protein>
    <recommendedName>
        <fullName evidence="1">Protein TusB</fullName>
    </recommendedName>
    <alternativeName>
        <fullName evidence="1">tRNA 2-thiouridine synthesizing protein B</fullName>
    </alternativeName>
</protein>
<organism>
    <name type="scientific">Yersinia pestis bv. Antiqua (strain Angola)</name>
    <dbReference type="NCBI Taxonomy" id="349746"/>
    <lineage>
        <taxon>Bacteria</taxon>
        <taxon>Pseudomonadati</taxon>
        <taxon>Pseudomonadota</taxon>
        <taxon>Gammaproteobacteria</taxon>
        <taxon>Enterobacterales</taxon>
        <taxon>Yersiniaceae</taxon>
        <taxon>Yersinia</taxon>
    </lineage>
</organism>
<name>TUSB_YERPG</name>
<feature type="chain" id="PRO_1000147196" description="Protein TusB">
    <location>
        <begin position="1"/>
        <end position="95"/>
    </location>
</feature>
<sequence length="95" mass="10577">MLYTVSHSPYHCDLSALLRLATSEDDILLLQDGVIAALKESETLKLLLNNPASLFVLEDDVIARGLVGQISDNATLISYTHFVDLTLRHQQQLAW</sequence>
<proteinExistence type="inferred from homology"/>